<reference key="1">
    <citation type="journal article" date="2000" name="Nature">
        <title>Sequence and analysis of chromosome 1 of the plant Arabidopsis thaliana.</title>
        <authorList>
            <person name="Theologis A."/>
            <person name="Ecker J.R."/>
            <person name="Palm C.J."/>
            <person name="Federspiel N.A."/>
            <person name="Kaul S."/>
            <person name="White O."/>
            <person name="Alonso J."/>
            <person name="Altafi H."/>
            <person name="Araujo R."/>
            <person name="Bowman C.L."/>
            <person name="Brooks S.Y."/>
            <person name="Buehler E."/>
            <person name="Chan A."/>
            <person name="Chao Q."/>
            <person name="Chen H."/>
            <person name="Cheuk R.F."/>
            <person name="Chin C.W."/>
            <person name="Chung M.K."/>
            <person name="Conn L."/>
            <person name="Conway A.B."/>
            <person name="Conway A.R."/>
            <person name="Creasy T.H."/>
            <person name="Dewar K."/>
            <person name="Dunn P."/>
            <person name="Etgu P."/>
            <person name="Feldblyum T.V."/>
            <person name="Feng J.-D."/>
            <person name="Fong B."/>
            <person name="Fujii C.Y."/>
            <person name="Gill J.E."/>
            <person name="Goldsmith A.D."/>
            <person name="Haas B."/>
            <person name="Hansen N.F."/>
            <person name="Hughes B."/>
            <person name="Huizar L."/>
            <person name="Hunter J.L."/>
            <person name="Jenkins J."/>
            <person name="Johnson-Hopson C."/>
            <person name="Khan S."/>
            <person name="Khaykin E."/>
            <person name="Kim C.J."/>
            <person name="Koo H.L."/>
            <person name="Kremenetskaia I."/>
            <person name="Kurtz D.B."/>
            <person name="Kwan A."/>
            <person name="Lam B."/>
            <person name="Langin-Hooper S."/>
            <person name="Lee A."/>
            <person name="Lee J.M."/>
            <person name="Lenz C.A."/>
            <person name="Li J.H."/>
            <person name="Li Y.-P."/>
            <person name="Lin X."/>
            <person name="Liu S.X."/>
            <person name="Liu Z.A."/>
            <person name="Luros J.S."/>
            <person name="Maiti R."/>
            <person name="Marziali A."/>
            <person name="Militscher J."/>
            <person name="Miranda M."/>
            <person name="Nguyen M."/>
            <person name="Nierman W.C."/>
            <person name="Osborne B.I."/>
            <person name="Pai G."/>
            <person name="Peterson J."/>
            <person name="Pham P.K."/>
            <person name="Rizzo M."/>
            <person name="Rooney T."/>
            <person name="Rowley D."/>
            <person name="Sakano H."/>
            <person name="Salzberg S.L."/>
            <person name="Schwartz J.R."/>
            <person name="Shinn P."/>
            <person name="Southwick A.M."/>
            <person name="Sun H."/>
            <person name="Tallon L.J."/>
            <person name="Tambunga G."/>
            <person name="Toriumi M.J."/>
            <person name="Town C.D."/>
            <person name="Utterback T."/>
            <person name="Van Aken S."/>
            <person name="Vaysberg M."/>
            <person name="Vysotskaia V.S."/>
            <person name="Walker M."/>
            <person name="Wu D."/>
            <person name="Yu G."/>
            <person name="Fraser C.M."/>
            <person name="Venter J.C."/>
            <person name="Davis R.W."/>
        </authorList>
    </citation>
    <scope>NUCLEOTIDE SEQUENCE [LARGE SCALE GENOMIC DNA]</scope>
    <source>
        <strain>cv. Columbia</strain>
    </source>
</reference>
<reference key="2">
    <citation type="journal article" date="2017" name="Plant J.">
        <title>Araport11: a complete reannotation of the Arabidopsis thaliana reference genome.</title>
        <authorList>
            <person name="Cheng C.Y."/>
            <person name="Krishnakumar V."/>
            <person name="Chan A.P."/>
            <person name="Thibaud-Nissen F."/>
            <person name="Schobel S."/>
            <person name="Town C.D."/>
        </authorList>
    </citation>
    <scope>GENOME REANNOTATION</scope>
    <source>
        <strain>cv. Columbia</strain>
    </source>
</reference>
<reference key="3">
    <citation type="submission" date="2006-05" db="EMBL/GenBank/DDBJ databases">
        <title>Arabidopsis ORF clones.</title>
        <authorList>
            <person name="Quinitio C."/>
            <person name="Chen H."/>
            <person name="Kim C.J."/>
            <person name="Shinn P."/>
            <person name="Ecker J.R."/>
        </authorList>
    </citation>
    <scope>NUCLEOTIDE SEQUENCE [LARGE SCALE MRNA]</scope>
    <source>
        <strain>cv. Columbia</strain>
    </source>
</reference>
<reference key="4">
    <citation type="submission" date="2002-03" db="EMBL/GenBank/DDBJ databases">
        <title>Full-length cDNA from Arabidopsis thaliana.</title>
        <authorList>
            <person name="Brover V.V."/>
            <person name="Troukhan M.E."/>
            <person name="Alexandrov N.A."/>
            <person name="Lu Y.-P."/>
            <person name="Flavell R.B."/>
            <person name="Feldmann K.A."/>
        </authorList>
    </citation>
    <scope>NUCLEOTIDE SEQUENCE [LARGE SCALE MRNA]</scope>
</reference>
<reference key="5">
    <citation type="journal article" date="2012" name="Mol. Cell. Proteomics">
        <title>Comparative large-scale characterisation of plant vs. mammal proteins reveals similar and idiosyncratic N-alpha acetylation features.</title>
        <authorList>
            <person name="Bienvenut W.V."/>
            <person name="Sumpton D."/>
            <person name="Martinez A."/>
            <person name="Lilla S."/>
            <person name="Espagne C."/>
            <person name="Meinnel T."/>
            <person name="Giglione C."/>
        </authorList>
    </citation>
    <scope>ACETYLATION [LARGE SCALE ANALYSIS] AT SER-2</scope>
    <scope>CLEAVAGE OF INITIATOR METHIONINE [LARGE SCALE ANALYSIS]</scope>
    <scope>IDENTIFICATION BY MASS SPECTROMETRY [LARGE SCALE ANALYSIS]</scope>
</reference>
<reference key="6">
    <citation type="journal article" date="2012" name="Plant Cell">
        <title>LSM proteins provide accurate splicing and decay of selected transcripts to ensure normal Arabidopsis development.</title>
        <authorList>
            <person name="Perea-Resa C."/>
            <person name="Hernandez-Verdeja T."/>
            <person name="Lopez-Cobollo R."/>
            <person name="del Mar Castellano M."/>
            <person name="Salinas J."/>
        </authorList>
    </citation>
    <scope>FUNCTION</scope>
    <scope>SUBUNIT</scope>
    <scope>INTERACTION WITH LSM2; LSM6A AND LSM6B</scope>
    <scope>SUBCELLULAR LOCATION</scope>
    <scope>TISSUE SPECIFICITY</scope>
    <scope>GENE FAMILY</scope>
</reference>
<reference key="7">
    <citation type="journal article" date="2013" name="Nucleic Acids Res.">
        <title>Arabidopsis thaliana LSM proteins function in mRNA splicing and degradation.</title>
        <authorList>
            <person name="Golisz A."/>
            <person name="Sikorski P.J."/>
            <person name="Kruszka K."/>
            <person name="Kufel J."/>
        </authorList>
    </citation>
    <scope>IDENTIFICATION BY MASS SPECTROMETRY</scope>
    <scope>FUNCTION</scope>
    <scope>SUBUNIT</scope>
    <scope>TISSUE SPECIFICITY</scope>
</reference>
<dbReference type="EMBL" id="AC079283">
    <property type="protein sequence ID" value="AAG51149.1"/>
    <property type="molecule type" value="Genomic_DNA"/>
</dbReference>
<dbReference type="EMBL" id="CP002684">
    <property type="protein sequence ID" value="AEE35896.1"/>
    <property type="molecule type" value="Genomic_DNA"/>
</dbReference>
<dbReference type="EMBL" id="BT025575">
    <property type="protein sequence ID" value="ABF58993.1"/>
    <property type="molecule type" value="mRNA"/>
</dbReference>
<dbReference type="EMBL" id="AY086266">
    <property type="protein sequence ID" value="AAM64339.1"/>
    <property type="molecule type" value="mRNA"/>
</dbReference>
<dbReference type="PIR" id="D96797">
    <property type="entry name" value="D96797"/>
</dbReference>
<dbReference type="RefSeq" id="NP_177812.1">
    <property type="nucleotide sequence ID" value="NM_106337.2"/>
</dbReference>
<dbReference type="SMR" id="Q9C6K5"/>
<dbReference type="ComplexPortal" id="CPX-1345">
    <property type="entry name" value="LSM1-7-PAT1 complex, variant LSM1A-LSM3B-LSM6B-PAT1"/>
</dbReference>
<dbReference type="ComplexPortal" id="CPX-1346">
    <property type="entry name" value="LSM1-7-PAT1 complex, variant LSM1A-LSM3B-LSM6A-PAT1"/>
</dbReference>
<dbReference type="ComplexPortal" id="CPX-1348">
    <property type="entry name" value="LSM1-7-PAT1 complex, variant LSM1B-LSM3B-LSM6A-PAT1"/>
</dbReference>
<dbReference type="ComplexPortal" id="CPX-1349">
    <property type="entry name" value="LSM1-7-PAT1 complex, variant LSM1B-LSM3B-LSM6B-PAT1"/>
</dbReference>
<dbReference type="ComplexPortal" id="CPX-1353">
    <property type="entry name" value="LSM2-8 complex, variant LSM3B-LSM6A"/>
</dbReference>
<dbReference type="ComplexPortal" id="CPX-1354">
    <property type="entry name" value="LSM2-8 complex, variant LSM3B-LSM6B"/>
</dbReference>
<dbReference type="ComplexPortal" id="CPX-1393">
    <property type="entry name" value="LSM1-7-PAT1 complex, variant LSM1A-LSM3B-LSM6A-PAT1H1"/>
</dbReference>
<dbReference type="ComplexPortal" id="CPX-1394">
    <property type="entry name" value="LSM1-7-PAT1 complex, variant LSM1A-LSM3B-LSM6B-PAT1H1"/>
</dbReference>
<dbReference type="ComplexPortal" id="CPX-1397">
    <property type="entry name" value="LSM1-7-PAT1 complex, variant LSM1B-LSM3B-LSM6A-PAT1H1"/>
</dbReference>
<dbReference type="ComplexPortal" id="CPX-1398">
    <property type="entry name" value="LSM1-7-PAT1 complex, variant LSM1B-LSM3B-LSM6B-PAT1H1"/>
</dbReference>
<dbReference type="ComplexPortal" id="CPX-1401">
    <property type="entry name" value="LSM1-7-PAT1 complex, variant LSM1A-LSM3B-LSM6A-PAT1H2"/>
</dbReference>
<dbReference type="ComplexPortal" id="CPX-1402">
    <property type="entry name" value="LSM1-7-PAT1 complex, variant LSM1A-LSM3B-LSM6B-PAT1H2"/>
</dbReference>
<dbReference type="ComplexPortal" id="CPX-1405">
    <property type="entry name" value="LSM1-7-PAT1 complex, variant LSM1B-LSM3B-LSM6A-PAT1H2"/>
</dbReference>
<dbReference type="ComplexPortal" id="CPX-1406">
    <property type="entry name" value="LSM1-7-PAT1 complex, variant LSM1B-LSM3B-LSM6B-PAT1H2"/>
</dbReference>
<dbReference type="FunCoup" id="Q9C6K5">
    <property type="interactions" value="3602"/>
</dbReference>
<dbReference type="IntAct" id="Q9C6K5">
    <property type="interactions" value="1"/>
</dbReference>
<dbReference type="STRING" id="3702.Q9C6K5"/>
<dbReference type="iPTMnet" id="Q9C6K5"/>
<dbReference type="PaxDb" id="3702-AT1G76860.1"/>
<dbReference type="ProteomicsDB" id="238803"/>
<dbReference type="EnsemblPlants" id="AT1G76860.1">
    <property type="protein sequence ID" value="AT1G76860.1"/>
    <property type="gene ID" value="AT1G76860"/>
</dbReference>
<dbReference type="GeneID" id="844021"/>
<dbReference type="Gramene" id="AT1G76860.1">
    <property type="protein sequence ID" value="AT1G76860.1"/>
    <property type="gene ID" value="AT1G76860"/>
</dbReference>
<dbReference type="KEGG" id="ath:AT1G76860"/>
<dbReference type="Araport" id="AT1G76860"/>
<dbReference type="TAIR" id="AT1G76860">
    <property type="gene designation" value="LSM3B"/>
</dbReference>
<dbReference type="eggNOG" id="KOG3460">
    <property type="taxonomic scope" value="Eukaryota"/>
</dbReference>
<dbReference type="HOGENOM" id="CLU_076902_5_1_1"/>
<dbReference type="InParanoid" id="Q9C6K5"/>
<dbReference type="OMA" id="FDSHCNI"/>
<dbReference type="OrthoDB" id="29543at2759"/>
<dbReference type="PhylomeDB" id="Q9C6K5"/>
<dbReference type="PRO" id="PR:Q9C6K5"/>
<dbReference type="Proteomes" id="UP000006548">
    <property type="component" value="Chromosome 1"/>
</dbReference>
<dbReference type="ExpressionAtlas" id="Q9C6K5">
    <property type="expression patterns" value="baseline and differential"/>
</dbReference>
<dbReference type="GO" id="GO:1990726">
    <property type="term" value="C:Lsm1-7-Pat1 complex"/>
    <property type="evidence" value="ECO:0000303"/>
    <property type="project" value="ComplexPortal"/>
</dbReference>
<dbReference type="GO" id="GO:0120115">
    <property type="term" value="C:Lsm2-8 complex"/>
    <property type="evidence" value="ECO:0000315"/>
    <property type="project" value="ComplexPortal"/>
</dbReference>
<dbReference type="GO" id="GO:0005739">
    <property type="term" value="C:mitochondrion"/>
    <property type="evidence" value="ECO:0007005"/>
    <property type="project" value="TAIR"/>
</dbReference>
<dbReference type="GO" id="GO:0005634">
    <property type="term" value="C:nucleus"/>
    <property type="evidence" value="ECO:0000314"/>
    <property type="project" value="ComplexPortal"/>
</dbReference>
<dbReference type="GO" id="GO:0000932">
    <property type="term" value="C:P-body"/>
    <property type="evidence" value="ECO:0000303"/>
    <property type="project" value="ComplexPortal"/>
</dbReference>
<dbReference type="GO" id="GO:0005681">
    <property type="term" value="C:spliceosomal complex"/>
    <property type="evidence" value="ECO:0007669"/>
    <property type="project" value="UniProtKB-KW"/>
</dbReference>
<dbReference type="GO" id="GO:0003723">
    <property type="term" value="F:RNA binding"/>
    <property type="evidence" value="ECO:0007669"/>
    <property type="project" value="UniProtKB-KW"/>
</dbReference>
<dbReference type="GO" id="GO:0000290">
    <property type="term" value="P:deadenylation-dependent decapping of nuclear-transcribed mRNA"/>
    <property type="evidence" value="ECO:0000269"/>
    <property type="project" value="ComplexPortal"/>
</dbReference>
<dbReference type="GO" id="GO:0000398">
    <property type="term" value="P:mRNA splicing, via spliceosome"/>
    <property type="evidence" value="ECO:0000315"/>
    <property type="project" value="ComplexPortal"/>
</dbReference>
<dbReference type="CDD" id="cd01730">
    <property type="entry name" value="LSm3"/>
    <property type="match status" value="1"/>
</dbReference>
<dbReference type="FunFam" id="2.30.30.100:FF:000007">
    <property type="entry name" value="U6 snRNA-associated Sm-like protein LSm3"/>
    <property type="match status" value="1"/>
</dbReference>
<dbReference type="Gene3D" id="2.30.30.100">
    <property type="match status" value="1"/>
</dbReference>
<dbReference type="InterPro" id="IPR034105">
    <property type="entry name" value="Lsm3"/>
</dbReference>
<dbReference type="InterPro" id="IPR010920">
    <property type="entry name" value="LSM_dom_sf"/>
</dbReference>
<dbReference type="InterPro" id="IPR047575">
    <property type="entry name" value="Sm"/>
</dbReference>
<dbReference type="InterPro" id="IPR040002">
    <property type="entry name" value="Sm-like_LSM3"/>
</dbReference>
<dbReference type="InterPro" id="IPR001163">
    <property type="entry name" value="Sm_dom_euk/arc"/>
</dbReference>
<dbReference type="PANTHER" id="PTHR13110">
    <property type="entry name" value="U6 SNRNA-ASSOCIATED SM-LIKE PROTEIN LSM3"/>
    <property type="match status" value="1"/>
</dbReference>
<dbReference type="Pfam" id="PF01423">
    <property type="entry name" value="LSM"/>
    <property type="match status" value="1"/>
</dbReference>
<dbReference type="SMART" id="SM00651">
    <property type="entry name" value="Sm"/>
    <property type="match status" value="1"/>
</dbReference>
<dbReference type="SUPFAM" id="SSF50182">
    <property type="entry name" value="Sm-like ribonucleoproteins"/>
    <property type="match status" value="1"/>
</dbReference>
<dbReference type="PROSITE" id="PS52002">
    <property type="entry name" value="SM"/>
    <property type="match status" value="1"/>
</dbReference>
<proteinExistence type="evidence at protein level"/>
<feature type="initiator methionine" description="Removed" evidence="9">
    <location>
        <position position="1"/>
    </location>
</feature>
<feature type="chain" id="PRO_0000431645" description="Sm-like protein LSM3B">
    <location>
        <begin position="2"/>
        <end position="98"/>
    </location>
</feature>
<feature type="domain" description="Sm" evidence="1">
    <location>
        <begin position="11"/>
        <end position="96"/>
    </location>
</feature>
<feature type="modified residue" description="N-acetylserine" evidence="9">
    <location>
        <position position="2"/>
    </location>
</feature>
<name>LSM3B_ARATH</name>
<evidence type="ECO:0000255" key="1">
    <source>
        <dbReference type="PROSITE-ProRule" id="PRU01346"/>
    </source>
</evidence>
<evidence type="ECO:0000269" key="2">
    <source>
    </source>
</evidence>
<evidence type="ECO:0000269" key="3">
    <source>
    </source>
</evidence>
<evidence type="ECO:0000303" key="4">
    <source>
    </source>
</evidence>
<evidence type="ECO:0000303" key="5">
    <source>
    </source>
</evidence>
<evidence type="ECO:0000305" key="6"/>
<evidence type="ECO:0000312" key="7">
    <source>
        <dbReference type="Araport" id="AT1G76860"/>
    </source>
</evidence>
<evidence type="ECO:0000312" key="8">
    <source>
        <dbReference type="EMBL" id="AAG51149.1"/>
    </source>
</evidence>
<evidence type="ECO:0007744" key="9">
    <source>
    </source>
</evidence>
<protein>
    <recommendedName>
        <fullName evidence="6">Sm-like protein LSM3B</fullName>
        <shortName evidence="5">AtLSM3B</shortName>
    </recommendedName>
    <alternativeName>
        <fullName evidence="6">U6 snRNA-associated Sm-like protein LSM3B</fullName>
    </alternativeName>
</protein>
<gene>
    <name evidence="4" type="primary">LSM3B</name>
    <name evidence="7" type="ordered locus">At1g76860</name>
    <name evidence="8" type="ORF">F7O12.3</name>
</gene>
<sequence>MSGEEEATVREPLDLIRLSLDERIYVKLRSDRELRGKLHAFDQHLNMILGDVEETITTVEIDDETYEEIVRTTKRTIEFLFVRGDGVILVSPPLRTAA</sequence>
<accession>Q9C6K5</accession>
<organism>
    <name type="scientific">Arabidopsis thaliana</name>
    <name type="common">Mouse-ear cress</name>
    <dbReference type="NCBI Taxonomy" id="3702"/>
    <lineage>
        <taxon>Eukaryota</taxon>
        <taxon>Viridiplantae</taxon>
        <taxon>Streptophyta</taxon>
        <taxon>Embryophyta</taxon>
        <taxon>Tracheophyta</taxon>
        <taxon>Spermatophyta</taxon>
        <taxon>Magnoliopsida</taxon>
        <taxon>eudicotyledons</taxon>
        <taxon>Gunneridae</taxon>
        <taxon>Pentapetalae</taxon>
        <taxon>rosids</taxon>
        <taxon>malvids</taxon>
        <taxon>Brassicales</taxon>
        <taxon>Brassicaceae</taxon>
        <taxon>Camelineae</taxon>
        <taxon>Arabidopsis</taxon>
    </lineage>
</organism>
<keyword id="KW-0007">Acetylation</keyword>
<keyword id="KW-0963">Cytoplasm</keyword>
<keyword id="KW-0507">mRNA processing</keyword>
<keyword id="KW-0508">mRNA splicing</keyword>
<keyword id="KW-0539">Nucleus</keyword>
<keyword id="KW-1185">Reference proteome</keyword>
<keyword id="KW-0687">Ribonucleoprotein</keyword>
<keyword id="KW-0694">RNA-binding</keyword>
<keyword id="KW-0747">Spliceosome</keyword>
<comment type="function">
    <text evidence="2 3">Component of LSM protein complexes, which are involved in RNA processing. Component of the cytoplasmic LSM1-LSM7 complex which is involved in mRNA degradation by promoting decapping and leading to accurate 5'-3' mRNA decay. The cytoplasmic LSM1-LSM7 complex regulates developmental gene expression by the decapping of specific development-related transcripts. Component of the nuclear LSM2-LSM8 complex which is involved splicing nuclear mRNAs. LSM2-LSM8 binds directly to the U6 small nuclear RNAs (snRNAs) and is essential for accurate splicing of selected development-related mRNAs through the stabilization of the spliceosomal U6 snRNA. Plays a critical role in the regulation of development-related gene expression.</text>
</comment>
<comment type="subunit">
    <text evidence="2 3">Component of the heptameric LSM1-LSM7 complex that forms a seven-membered ring structure with a donut shape. The LSM subunits are arranged in the order LSM1, LSM2, LSM3, LSM6, LSM5, LSM7 and LSM4. Component of the heptameric LSM2-LSM8 complex that forms a seven-membered ring structure with a donut shape. The LSM subunits are arranged in the order LSM8, LSM2, LSM3, LSM6, LSM5, LSM7 and LSM4 (PubMed:23221597, PubMed:23620288). LSM3B subunit interacts only with its two neighboring subunits, LSM2 and LSM6A or LSM6B (PubMed:23221597).</text>
</comment>
<comment type="subcellular location">
    <subcellularLocation>
        <location evidence="2">Cytoplasm</location>
    </subcellularLocation>
    <subcellularLocation>
        <location evidence="2">Nucleus</location>
    </subcellularLocation>
</comment>
<comment type="tissue specificity">
    <text evidence="2 3">Expressed in roots, leaves, stems, flowers and siliques.</text>
</comment>
<comment type="similarity">
    <text evidence="6">Belongs to the snRNP Sm proteins family.</text>
</comment>